<keyword id="KW-0053">Apoptosis</keyword>
<keyword id="KW-1003">Cell membrane</keyword>
<keyword id="KW-0159">Chromosome partition</keyword>
<keyword id="KW-0963">Cytoplasm</keyword>
<keyword id="KW-0206">Cytoskeleton</keyword>
<keyword id="KW-0217">Developmental protein</keyword>
<keyword id="KW-0472">Membrane</keyword>
<keyword id="KW-0479">Metal-binding</keyword>
<keyword id="KW-0539">Nucleus</keyword>
<keyword id="KW-0597">Phosphoprotein</keyword>
<keyword id="KW-1185">Reference proteome</keyword>
<keyword id="KW-0862">Zinc</keyword>
<sequence length="219" mass="25229">MDFLFGSRSSKTFKPKKNIPEGTHQYDLMKHAAATLGSGNLRNAVALPDGEDLNEWVAVNTVDFFNQINMLYGTITEFCTEETCGIMSAGPKYEYHWADGLTVKKPIKCSAPKYIDYLMTWVQDQLDDETLFPSKIGVPFPKNFHSSAKTILKRLFRVYAHIYHQHFTEVVTLGEEAHLNTSFKHFIFFVQEFNLIERRELAPLQELIDKLTAKDERQI</sequence>
<dbReference type="EMBL" id="AE014297">
    <property type="protein sequence ID" value="AAF55993.2"/>
    <property type="molecule type" value="Genomic_DNA"/>
</dbReference>
<dbReference type="EMBL" id="AY061520">
    <property type="protein sequence ID" value="AAL29068.1"/>
    <property type="molecule type" value="mRNA"/>
</dbReference>
<dbReference type="RefSeq" id="NP_001262835.1">
    <property type="nucleotide sequence ID" value="NM_001275906.1"/>
</dbReference>
<dbReference type="RefSeq" id="NP_001287465.1">
    <property type="nucleotide sequence ID" value="NM_001300536.1"/>
</dbReference>
<dbReference type="RefSeq" id="NP_651041.3">
    <property type="nucleotide sequence ID" value="NM_142784.3"/>
</dbReference>
<dbReference type="SMR" id="Q95RA8"/>
<dbReference type="BioGRID" id="67590">
    <property type="interactions" value="21"/>
</dbReference>
<dbReference type="DIP" id="DIP-21478N"/>
<dbReference type="FunCoup" id="Q95RA8">
    <property type="interactions" value="2206"/>
</dbReference>
<dbReference type="IntAct" id="Q95RA8">
    <property type="interactions" value="7"/>
</dbReference>
<dbReference type="MINT" id="Q95RA8"/>
<dbReference type="STRING" id="7227.FBpp0307973"/>
<dbReference type="PaxDb" id="7227-FBpp0083624"/>
<dbReference type="DNASU" id="42634"/>
<dbReference type="EnsemblMetazoa" id="FBtr0084229">
    <property type="protein sequence ID" value="FBpp0083624"/>
    <property type="gene ID" value="FBgn0038965"/>
</dbReference>
<dbReference type="EnsemblMetazoa" id="FBtr0337044">
    <property type="protein sequence ID" value="FBpp0307973"/>
    <property type="gene ID" value="FBgn0038965"/>
</dbReference>
<dbReference type="EnsemblMetazoa" id="FBtr0345205">
    <property type="protein sequence ID" value="FBpp0311400"/>
    <property type="gene ID" value="FBgn0038965"/>
</dbReference>
<dbReference type="GeneID" id="42634"/>
<dbReference type="KEGG" id="dme:Dmel_CG13852"/>
<dbReference type="AGR" id="FB:FBgn0038965"/>
<dbReference type="CTD" id="42634"/>
<dbReference type="FlyBase" id="FBgn0038965">
    <property type="gene designation" value="mats"/>
</dbReference>
<dbReference type="VEuPathDB" id="VectorBase:FBgn0038965"/>
<dbReference type="eggNOG" id="KOG0440">
    <property type="taxonomic scope" value="Eukaryota"/>
</dbReference>
<dbReference type="GeneTree" id="ENSGT01120000271863"/>
<dbReference type="HOGENOM" id="CLU_038321_3_1_1"/>
<dbReference type="InParanoid" id="Q95RA8"/>
<dbReference type="OMA" id="VDNEQMF"/>
<dbReference type="OrthoDB" id="8170117at2759"/>
<dbReference type="PhylomeDB" id="Q95RA8"/>
<dbReference type="Reactome" id="R-DME-2028269">
    <property type="pathway name" value="Signaling by Hippo"/>
</dbReference>
<dbReference type="Reactome" id="R-DME-390089">
    <property type="pathway name" value="Formation of the Hippo kinase cassette"/>
</dbReference>
<dbReference type="Reactome" id="R-DME-390098">
    <property type="pathway name" value="Phosphorylation-dependent inhibition of YKI"/>
</dbReference>
<dbReference type="Reactome" id="R-DME-390150">
    <property type="pathway name" value="DS ligand bound to FT receptor"/>
</dbReference>
<dbReference type="SignaLink" id="Q95RA8"/>
<dbReference type="BioGRID-ORCS" id="42634">
    <property type="hits" value="0 hits in 3 CRISPR screens"/>
</dbReference>
<dbReference type="CD-CODE" id="2838EF58">
    <property type="entry name" value="Centrosome"/>
</dbReference>
<dbReference type="GenomeRNAi" id="42634"/>
<dbReference type="PRO" id="PR:Q95RA8"/>
<dbReference type="Proteomes" id="UP000000803">
    <property type="component" value="Chromosome 3R"/>
</dbReference>
<dbReference type="Bgee" id="FBgn0038965">
    <property type="expression patterns" value="Expressed in saliva-secreting gland and 138 other cell types or tissues"/>
</dbReference>
<dbReference type="ExpressionAtlas" id="Q95RA8">
    <property type="expression patterns" value="baseline and differential"/>
</dbReference>
<dbReference type="GO" id="GO:0005813">
    <property type="term" value="C:centrosome"/>
    <property type="evidence" value="ECO:0000314"/>
    <property type="project" value="UniProtKB"/>
</dbReference>
<dbReference type="GO" id="GO:0005737">
    <property type="term" value="C:cytoplasm"/>
    <property type="evidence" value="ECO:0000318"/>
    <property type="project" value="GO_Central"/>
</dbReference>
<dbReference type="GO" id="GO:0005829">
    <property type="term" value="C:cytosol"/>
    <property type="evidence" value="ECO:0000314"/>
    <property type="project" value="UniProtKB"/>
</dbReference>
<dbReference type="GO" id="GO:0005634">
    <property type="term" value="C:nucleus"/>
    <property type="evidence" value="ECO:0000314"/>
    <property type="project" value="UniProtKB"/>
</dbReference>
<dbReference type="GO" id="GO:0005886">
    <property type="term" value="C:plasma membrane"/>
    <property type="evidence" value="ECO:0000314"/>
    <property type="project" value="UniProtKB"/>
</dbReference>
<dbReference type="GO" id="GO:0046872">
    <property type="term" value="F:metal ion binding"/>
    <property type="evidence" value="ECO:0007669"/>
    <property type="project" value="UniProtKB-KW"/>
</dbReference>
<dbReference type="GO" id="GO:0030295">
    <property type="term" value="F:protein kinase activator activity"/>
    <property type="evidence" value="ECO:0000314"/>
    <property type="project" value="FlyBase"/>
</dbReference>
<dbReference type="GO" id="GO:0019901">
    <property type="term" value="F:protein kinase binding"/>
    <property type="evidence" value="ECO:0000353"/>
    <property type="project" value="FlyBase"/>
</dbReference>
<dbReference type="GO" id="GO:0006915">
    <property type="term" value="P:apoptotic process"/>
    <property type="evidence" value="ECO:0000315"/>
    <property type="project" value="UniProtKB"/>
</dbReference>
<dbReference type="GO" id="GO:0007059">
    <property type="term" value="P:chromosome segregation"/>
    <property type="evidence" value="ECO:0000315"/>
    <property type="project" value="UniProtKB"/>
</dbReference>
<dbReference type="GO" id="GO:0030707">
    <property type="term" value="P:follicle cell of egg chamber development"/>
    <property type="evidence" value="ECO:0000315"/>
    <property type="project" value="FlyBase"/>
</dbReference>
<dbReference type="GO" id="GO:0035329">
    <property type="term" value="P:hippo signaling"/>
    <property type="evidence" value="ECO:0000315"/>
    <property type="project" value="FlyBase"/>
</dbReference>
<dbReference type="GO" id="GO:0008285">
    <property type="term" value="P:negative regulation of cell population proliferation"/>
    <property type="evidence" value="ECO:0000315"/>
    <property type="project" value="UniProtKB"/>
</dbReference>
<dbReference type="GO" id="GO:0007165">
    <property type="term" value="P:signal transduction"/>
    <property type="evidence" value="ECO:0000315"/>
    <property type="project" value="UniProtKB"/>
</dbReference>
<dbReference type="FunFam" id="1.20.140.30:FF:000001">
    <property type="entry name" value="MOB kinase activator 1A"/>
    <property type="match status" value="1"/>
</dbReference>
<dbReference type="Gene3D" id="1.20.140.30">
    <property type="entry name" value="MOB kinase activator"/>
    <property type="match status" value="1"/>
</dbReference>
<dbReference type="InterPro" id="IPR005301">
    <property type="entry name" value="MOB_kinase_act_fam"/>
</dbReference>
<dbReference type="InterPro" id="IPR036703">
    <property type="entry name" value="MOB_kinase_act_sf"/>
</dbReference>
<dbReference type="PANTHER" id="PTHR22599">
    <property type="entry name" value="MPS ONE BINDER KINASE ACTIVATOR-LIKE MOB"/>
    <property type="match status" value="1"/>
</dbReference>
<dbReference type="Pfam" id="PF03637">
    <property type="entry name" value="Mob1_phocein"/>
    <property type="match status" value="1"/>
</dbReference>
<dbReference type="SMART" id="SM01388">
    <property type="entry name" value="Mob1_phocein"/>
    <property type="match status" value="1"/>
</dbReference>
<dbReference type="SUPFAM" id="SSF101152">
    <property type="entry name" value="Mob1/phocein"/>
    <property type="match status" value="1"/>
</dbReference>
<name>MOB1_DROME</name>
<reference evidence="11" key="1">
    <citation type="journal article" date="2000" name="Science">
        <title>The genome sequence of Drosophila melanogaster.</title>
        <authorList>
            <person name="Adams M.D."/>
            <person name="Celniker S.E."/>
            <person name="Holt R.A."/>
            <person name="Evans C.A."/>
            <person name="Gocayne J.D."/>
            <person name="Amanatides P.G."/>
            <person name="Scherer S.E."/>
            <person name="Li P.W."/>
            <person name="Hoskins R.A."/>
            <person name="Galle R.F."/>
            <person name="George R.A."/>
            <person name="Lewis S.E."/>
            <person name="Richards S."/>
            <person name="Ashburner M."/>
            <person name="Henderson S.N."/>
            <person name="Sutton G.G."/>
            <person name="Wortman J.R."/>
            <person name="Yandell M.D."/>
            <person name="Zhang Q."/>
            <person name="Chen L.X."/>
            <person name="Brandon R.C."/>
            <person name="Rogers Y.-H.C."/>
            <person name="Blazej R.G."/>
            <person name="Champe M."/>
            <person name="Pfeiffer B.D."/>
            <person name="Wan K.H."/>
            <person name="Doyle C."/>
            <person name="Baxter E.G."/>
            <person name="Helt G."/>
            <person name="Nelson C.R."/>
            <person name="Miklos G.L.G."/>
            <person name="Abril J.F."/>
            <person name="Agbayani A."/>
            <person name="An H.-J."/>
            <person name="Andrews-Pfannkoch C."/>
            <person name="Baldwin D."/>
            <person name="Ballew R.M."/>
            <person name="Basu A."/>
            <person name="Baxendale J."/>
            <person name="Bayraktaroglu L."/>
            <person name="Beasley E.M."/>
            <person name="Beeson K.Y."/>
            <person name="Benos P.V."/>
            <person name="Berman B.P."/>
            <person name="Bhandari D."/>
            <person name="Bolshakov S."/>
            <person name="Borkova D."/>
            <person name="Botchan M.R."/>
            <person name="Bouck J."/>
            <person name="Brokstein P."/>
            <person name="Brottier P."/>
            <person name="Burtis K.C."/>
            <person name="Busam D.A."/>
            <person name="Butler H."/>
            <person name="Cadieu E."/>
            <person name="Center A."/>
            <person name="Chandra I."/>
            <person name="Cherry J.M."/>
            <person name="Cawley S."/>
            <person name="Dahlke C."/>
            <person name="Davenport L.B."/>
            <person name="Davies P."/>
            <person name="de Pablos B."/>
            <person name="Delcher A."/>
            <person name="Deng Z."/>
            <person name="Mays A.D."/>
            <person name="Dew I."/>
            <person name="Dietz S.M."/>
            <person name="Dodson K."/>
            <person name="Doup L.E."/>
            <person name="Downes M."/>
            <person name="Dugan-Rocha S."/>
            <person name="Dunkov B.C."/>
            <person name="Dunn P."/>
            <person name="Durbin K.J."/>
            <person name="Evangelista C.C."/>
            <person name="Ferraz C."/>
            <person name="Ferriera S."/>
            <person name="Fleischmann W."/>
            <person name="Fosler C."/>
            <person name="Gabrielian A.E."/>
            <person name="Garg N.S."/>
            <person name="Gelbart W.M."/>
            <person name="Glasser K."/>
            <person name="Glodek A."/>
            <person name="Gong F."/>
            <person name="Gorrell J.H."/>
            <person name="Gu Z."/>
            <person name="Guan P."/>
            <person name="Harris M."/>
            <person name="Harris N.L."/>
            <person name="Harvey D.A."/>
            <person name="Heiman T.J."/>
            <person name="Hernandez J.R."/>
            <person name="Houck J."/>
            <person name="Hostin D."/>
            <person name="Houston K.A."/>
            <person name="Howland T.J."/>
            <person name="Wei M.-H."/>
            <person name="Ibegwam C."/>
            <person name="Jalali M."/>
            <person name="Kalush F."/>
            <person name="Karpen G.H."/>
            <person name="Ke Z."/>
            <person name="Kennison J.A."/>
            <person name="Ketchum K.A."/>
            <person name="Kimmel B.E."/>
            <person name="Kodira C.D."/>
            <person name="Kraft C.L."/>
            <person name="Kravitz S."/>
            <person name="Kulp D."/>
            <person name="Lai Z."/>
            <person name="Lasko P."/>
            <person name="Lei Y."/>
            <person name="Levitsky A.A."/>
            <person name="Li J.H."/>
            <person name="Li Z."/>
            <person name="Liang Y."/>
            <person name="Lin X."/>
            <person name="Liu X."/>
            <person name="Mattei B."/>
            <person name="McIntosh T.C."/>
            <person name="McLeod M.P."/>
            <person name="McPherson D."/>
            <person name="Merkulov G."/>
            <person name="Milshina N.V."/>
            <person name="Mobarry C."/>
            <person name="Morris J."/>
            <person name="Moshrefi A."/>
            <person name="Mount S.M."/>
            <person name="Moy M."/>
            <person name="Murphy B."/>
            <person name="Murphy L."/>
            <person name="Muzny D.M."/>
            <person name="Nelson D.L."/>
            <person name="Nelson D.R."/>
            <person name="Nelson K.A."/>
            <person name="Nixon K."/>
            <person name="Nusskern D.R."/>
            <person name="Pacleb J.M."/>
            <person name="Palazzolo M."/>
            <person name="Pittman G.S."/>
            <person name="Pan S."/>
            <person name="Pollard J."/>
            <person name="Puri V."/>
            <person name="Reese M.G."/>
            <person name="Reinert K."/>
            <person name="Remington K."/>
            <person name="Saunders R.D.C."/>
            <person name="Scheeler F."/>
            <person name="Shen H."/>
            <person name="Shue B.C."/>
            <person name="Siden-Kiamos I."/>
            <person name="Simpson M."/>
            <person name="Skupski M.P."/>
            <person name="Smith T.J."/>
            <person name="Spier E."/>
            <person name="Spradling A.C."/>
            <person name="Stapleton M."/>
            <person name="Strong R."/>
            <person name="Sun E."/>
            <person name="Svirskas R."/>
            <person name="Tector C."/>
            <person name="Turner R."/>
            <person name="Venter E."/>
            <person name="Wang A.H."/>
            <person name="Wang X."/>
            <person name="Wang Z.-Y."/>
            <person name="Wassarman D.A."/>
            <person name="Weinstock G.M."/>
            <person name="Weissenbach J."/>
            <person name="Williams S.M."/>
            <person name="Woodage T."/>
            <person name="Worley K.C."/>
            <person name="Wu D."/>
            <person name="Yang S."/>
            <person name="Yao Q.A."/>
            <person name="Ye J."/>
            <person name="Yeh R.-F."/>
            <person name="Zaveri J.S."/>
            <person name="Zhan M."/>
            <person name="Zhang G."/>
            <person name="Zhao Q."/>
            <person name="Zheng L."/>
            <person name="Zheng X.H."/>
            <person name="Zhong F.N."/>
            <person name="Zhong W."/>
            <person name="Zhou X."/>
            <person name="Zhu S.C."/>
            <person name="Zhu X."/>
            <person name="Smith H.O."/>
            <person name="Gibbs R.A."/>
            <person name="Myers E.W."/>
            <person name="Rubin G.M."/>
            <person name="Venter J.C."/>
        </authorList>
    </citation>
    <scope>NUCLEOTIDE SEQUENCE [LARGE SCALE GENOMIC DNA]</scope>
    <source>
        <strain evidence="3">Berkeley</strain>
    </source>
</reference>
<reference evidence="10 11" key="2">
    <citation type="journal article" date="2002" name="Genome Biol.">
        <title>Annotation of the Drosophila melanogaster euchromatic genome: a systematic review.</title>
        <authorList>
            <person name="Misra S."/>
            <person name="Crosby M.A."/>
            <person name="Mungall C.J."/>
            <person name="Matthews B.B."/>
            <person name="Campbell K.S."/>
            <person name="Hradecky P."/>
            <person name="Huang Y."/>
            <person name="Kaminker J.S."/>
            <person name="Millburn G.H."/>
            <person name="Prochnik S.E."/>
            <person name="Smith C.D."/>
            <person name="Tupy J.L."/>
            <person name="Whitfield E.J."/>
            <person name="Bayraktaroglu L."/>
            <person name="Berman B.P."/>
            <person name="Bettencourt B.R."/>
            <person name="Celniker S.E."/>
            <person name="de Grey A.D.N.J."/>
            <person name="Drysdale R.A."/>
            <person name="Harris N.L."/>
            <person name="Richter J."/>
            <person name="Russo S."/>
            <person name="Schroeder A.J."/>
            <person name="Shu S.Q."/>
            <person name="Stapleton M."/>
            <person name="Yamada C."/>
            <person name="Ashburner M."/>
            <person name="Gelbart W.M."/>
            <person name="Rubin G.M."/>
            <person name="Lewis S.E."/>
        </authorList>
    </citation>
    <scope>GENOME REANNOTATION</scope>
    <source>
        <strain>Berkeley</strain>
    </source>
</reference>
<reference evidence="12" key="3">
    <citation type="journal article" date="2002" name="Genome Biol.">
        <title>A Drosophila full-length cDNA resource.</title>
        <authorList>
            <person name="Stapleton M."/>
            <person name="Carlson J.W."/>
            <person name="Brokstein P."/>
            <person name="Yu C."/>
            <person name="Champe M."/>
            <person name="George R.A."/>
            <person name="Guarin H."/>
            <person name="Kronmiller B."/>
            <person name="Pacleb J.M."/>
            <person name="Park S."/>
            <person name="Wan K.H."/>
            <person name="Rubin G.M."/>
            <person name="Celniker S.E."/>
        </authorList>
    </citation>
    <scope>NUCLEOTIDE SEQUENCE [LARGE SCALE MRNA]</scope>
    <source>
        <strain evidence="12">Berkeley</strain>
        <tissue evidence="4">Embryo</tissue>
    </source>
</reference>
<reference evidence="10" key="4">
    <citation type="journal article" date="2005" name="Cell">
        <title>Control of cell proliferation and apoptosis by mob as tumor suppressor, mats.</title>
        <authorList>
            <person name="Lai Z.-C."/>
            <person name="Wei X."/>
            <person name="Shimizu T."/>
            <person name="Ramos E."/>
            <person name="Rohrbaugh M."/>
            <person name="Nikolaidis N."/>
            <person name="Ho L.-L."/>
            <person name="Li Y."/>
        </authorList>
    </citation>
    <scope>FUNCTION</scope>
    <scope>INTERACTION WITH WTS</scope>
    <scope>PHOSPHORYLATION</scope>
    <scope>DISRUPTION PHENOTYPE</scope>
</reference>
<reference evidence="10" key="5">
    <citation type="journal article" date="2005" name="Mol. Biol. Cell">
        <title>Drosophila Mob family proteins interact with the related tricornered (Trc) and warts (Wts) kinases.</title>
        <authorList>
            <person name="He Y."/>
            <person name="Emoto K."/>
            <person name="Fang X."/>
            <person name="Ren N."/>
            <person name="Tian X."/>
            <person name="Jan Y.-N."/>
            <person name="Adler P.N."/>
        </authorList>
    </citation>
    <scope>FUNCTION</scope>
    <scope>INTERACTION WITH TRC</scope>
</reference>
<reference key="6">
    <citation type="journal article" date="2007" name="EMBO J.">
        <title>Mob as tumor suppressor is activated by Hippo kinase for growth inhibition in Drosophila.</title>
        <authorList>
            <person name="Wei X."/>
            <person name="Shimizu T."/>
            <person name="Lai Z.C."/>
        </authorList>
    </citation>
    <scope>FUNCTION</scope>
    <scope>PHOSPHORYLATION</scope>
</reference>
<reference key="7">
    <citation type="journal article" date="2008" name="Genetics">
        <title>The mob as tumor suppressor gene is essential for early development and regulates tissue growth in Drosophila.</title>
        <authorList>
            <person name="Shimizu T."/>
            <person name="Ho L.L."/>
            <person name="Lai Z.C."/>
        </authorList>
    </citation>
    <scope>FUNCTION</scope>
    <scope>SUBCELLULAR LOCATION</scope>
    <scope>TISSUE SPECIFICITY</scope>
</reference>
<reference key="8">
    <citation type="journal article" date="2010" name="Dev. Biol.">
        <title>Mob as tumor suppressor is activated at the cell membrane to control tissue growth and organ size in Drosophila.</title>
        <authorList>
            <person name="Ho L.L."/>
            <person name="Wei X."/>
            <person name="Shimizu T."/>
            <person name="Lai Z.C."/>
        </authorList>
    </citation>
    <scope>FUNCTION</scope>
    <scope>SUBCELLULAR LOCATION</scope>
</reference>
<feature type="chain" id="PRO_0000279700" description="MOB kinase activator-like 1">
    <location>
        <begin position="1"/>
        <end position="219"/>
    </location>
</feature>
<feature type="binding site" evidence="1">
    <location>
        <position position="79"/>
    </location>
    <ligand>
        <name>Zn(2+)</name>
        <dbReference type="ChEBI" id="CHEBI:29105"/>
    </ligand>
</feature>
<feature type="binding site" evidence="1">
    <location>
        <position position="84"/>
    </location>
    <ligand>
        <name>Zn(2+)</name>
        <dbReference type="ChEBI" id="CHEBI:29105"/>
    </ligand>
</feature>
<feature type="binding site" evidence="1">
    <location>
        <position position="161"/>
    </location>
    <ligand>
        <name>Zn(2+)</name>
        <dbReference type="ChEBI" id="CHEBI:29105"/>
    </ligand>
</feature>
<feature type="binding site" evidence="1">
    <location>
        <position position="166"/>
    </location>
    <ligand>
        <name>Zn(2+)</name>
        <dbReference type="ChEBI" id="CHEBI:29105"/>
    </ligand>
</feature>
<protein>
    <recommendedName>
        <fullName>MOB kinase activator-like 1</fullName>
    </recommendedName>
    <alternativeName>
        <fullName>Mob as tumor suppressor protein 1</fullName>
        <shortName>Dmob1</shortName>
    </alternativeName>
    <alternativeName>
        <fullName>Mps one binder kinase activator-like 1</fullName>
    </alternativeName>
</protein>
<accession>Q95RA8</accession>
<accession>Q9VD10</accession>
<organism>
    <name type="scientific">Drosophila melanogaster</name>
    <name type="common">Fruit fly</name>
    <dbReference type="NCBI Taxonomy" id="7227"/>
    <lineage>
        <taxon>Eukaryota</taxon>
        <taxon>Metazoa</taxon>
        <taxon>Ecdysozoa</taxon>
        <taxon>Arthropoda</taxon>
        <taxon>Hexapoda</taxon>
        <taxon>Insecta</taxon>
        <taxon>Pterygota</taxon>
        <taxon>Neoptera</taxon>
        <taxon>Endopterygota</taxon>
        <taxon>Diptera</taxon>
        <taxon>Brachycera</taxon>
        <taxon>Muscomorpha</taxon>
        <taxon>Ephydroidea</taxon>
        <taxon>Drosophilidae</taxon>
        <taxon>Drosophila</taxon>
        <taxon>Sophophora</taxon>
    </lineage>
</organism>
<evidence type="ECO:0000250" key="1">
    <source>
        <dbReference type="UniProtKB" id="Q9H8S9"/>
    </source>
</evidence>
<evidence type="ECO:0000255" key="2"/>
<evidence type="ECO:0000269" key="3">
    <source>
    </source>
</evidence>
<evidence type="ECO:0000269" key="4">
    <source>
    </source>
</evidence>
<evidence type="ECO:0000269" key="5">
    <source>
    </source>
</evidence>
<evidence type="ECO:0000269" key="6">
    <source>
    </source>
</evidence>
<evidence type="ECO:0000269" key="7">
    <source>
    </source>
</evidence>
<evidence type="ECO:0000269" key="8">
    <source>
    </source>
</evidence>
<evidence type="ECO:0000269" key="9">
    <source>
    </source>
</evidence>
<evidence type="ECO:0000305" key="10"/>
<evidence type="ECO:0000312" key="11">
    <source>
        <dbReference type="EMBL" id="AAF55993.2"/>
    </source>
</evidence>
<evidence type="ECO:0000312" key="12">
    <source>
        <dbReference type="EMBL" id="AAL29068.1"/>
    </source>
</evidence>
<evidence type="ECO:0000312" key="13">
    <source>
        <dbReference type="FlyBase" id="FBgn0038965"/>
    </source>
</evidence>
<comment type="function">
    <text evidence="5 6 7 8 9">Coactivator of Warts (Wts) kinase in the Hippo/SWH (Sav/Wts/Hpo)signaling pathway, a signaling pathway that plays a pivotal role in organ size control and tumor suppression by restricting proliferation and promoting apoptosis. The core of this pathway is composed of a kinase cascade wherein Hippo (Hpo), in complex with its regulatory protein Salvador (Sav), phosphorylates and activates Warts (Wts) in complex with its regulatory protein Mats, which in turn phosphorylates and inactivates the Yorkie (Yki)oncoprotein. The Hippo/SWH signaling pathway inhibits the activity of the transcriptional complex formed by Scalloped (sd) and Yki and the target genes of this pathway include cyclin-E (cycE), diap1 and bantam. Mats is essential for early development and is required for proper chromosomal segregation in developing embryos.</text>
</comment>
<comment type="subunit">
    <text evidence="5 6">Interacts with and activates trc and wts.</text>
</comment>
<comment type="interaction">
    <interactant intactId="EBI-143689">
        <id>Q95RA8</id>
    </interactant>
    <interactant intactId="EBI-101858">
        <id>Q8T0S6</id>
        <label>hpo</label>
    </interactant>
    <organismsDiffer>false</organismsDiffer>
    <experiments>2</experiments>
</comment>
<comment type="subcellular location">
    <subcellularLocation>
        <location>Cytoplasm</location>
        <location>Cytoskeleton</location>
        <location>Microtubule organizing center</location>
        <location>Centrosome</location>
    </subcellularLocation>
    <subcellularLocation>
        <location>Nucleus</location>
    </subcellularLocation>
    <subcellularLocation>
        <location>Cytoplasm</location>
        <location>Cytosol</location>
    </subcellularLocation>
    <subcellularLocation>
        <location>Cell membrane</location>
    </subcellularLocation>
    <text>Colocalizes with wts and cyclin E at the centrosome.</text>
</comment>
<comment type="tissue specificity">
    <text evidence="8">Ubiquitously expressed at low levels in developing tissues (at protein level).</text>
</comment>
<comment type="PTM">
    <text evidence="5 7">Phosphorylated by wts/mats kinase complex. Activated by phosphorylation by Hippo (Hpo) kinase which increases its affinity and its ability to activate Warts (Wts) kinase.</text>
</comment>
<comment type="disruption phenotype">
    <text evidence="5">Increased cell proliferation, defective apoptosis, and induction of tissue overgrowth.</text>
</comment>
<comment type="similarity">
    <text evidence="2">Belongs to the MOB1/phocein family.</text>
</comment>
<gene>
    <name evidence="13" type="primary">mats</name>
    <name type="ORF">CG13852</name>
</gene>
<proteinExistence type="evidence at protein level"/>